<accession>O74483</accession>
<protein>
    <recommendedName>
        <fullName evidence="4">LSM2-LSM8 complex subunit lsm8</fullName>
    </recommendedName>
</protein>
<feature type="chain" id="PRO_0000125584" description="LSM2-LSM8 complex subunit lsm8">
    <location>
        <begin position="1"/>
        <end position="94"/>
    </location>
</feature>
<feature type="domain" description="Sm" evidence="2">
    <location>
        <begin position="1"/>
        <end position="74"/>
    </location>
</feature>
<feature type="helix" evidence="7">
    <location>
        <begin position="2"/>
        <end position="6"/>
    </location>
</feature>
<feature type="strand" evidence="7">
    <location>
        <begin position="9"/>
        <end position="15"/>
    </location>
</feature>
<feature type="strand" evidence="7">
    <location>
        <begin position="20"/>
        <end position="28"/>
    </location>
</feature>
<feature type="strand" evidence="7">
    <location>
        <begin position="34"/>
        <end position="43"/>
    </location>
</feature>
<feature type="strand" evidence="7">
    <location>
        <begin position="46"/>
        <end position="48"/>
    </location>
</feature>
<feature type="strand" evidence="7">
    <location>
        <begin position="51"/>
        <end position="60"/>
    </location>
</feature>
<feature type="helix" evidence="7">
    <location>
        <begin position="62"/>
        <end position="64"/>
    </location>
</feature>
<feature type="strand" evidence="7">
    <location>
        <begin position="65"/>
        <end position="71"/>
    </location>
</feature>
<feature type="helix" evidence="7">
    <location>
        <begin position="73"/>
        <end position="78"/>
    </location>
</feature>
<feature type="helix" evidence="7">
    <location>
        <begin position="81"/>
        <end position="83"/>
    </location>
</feature>
<keyword id="KW-0002">3D-structure</keyword>
<keyword id="KW-0963">Cytoplasm</keyword>
<keyword id="KW-0507">mRNA processing</keyword>
<keyword id="KW-0508">mRNA splicing</keyword>
<keyword id="KW-0539">Nucleus</keyword>
<keyword id="KW-1185">Reference proteome</keyword>
<keyword id="KW-0687">Ribonucleoprotein</keyword>
<keyword id="KW-0694">RNA-binding</keyword>
<keyword id="KW-0747">Spliceosome</keyword>
<comment type="function">
    <text evidence="1 3">Component of the nuclear LSM2-LSM8 complex, which is involved in spliceosome assembly (PubMed:32518066). The LSM2-LSM8 complex plays a role in the biogenesis of the spliceosomal U4/U6-U5 tri-snRNP complex by accelerating prp24-mediated annealing of U4/U6 di-snRNA (By similarity). The LSM2-LSM8 complex binds U6 snRNA terminating with a cyclic 2',3' phosphate group; RNA with an unmodified 3' hydroxyl or non-cyclic 3' phosphate is bound less tightly (PubMed:32518066).</text>
</comment>
<comment type="subunit">
    <text evidence="3">Component of the heptameric LSM2-LSM8 complex that forms a seven-membered ring structure with a donut shape (PubMed:32518066). The LSm subunits are arranged in the order lsm8, lsm2, lsm3, lsm6, lsm5, lsm7 and lsm4 (PubMed:32518066).</text>
</comment>
<comment type="subcellular location">
    <subcellularLocation>
        <location evidence="1">Nucleus</location>
    </subcellularLocation>
    <subcellularLocation>
        <location evidence="1">Cytoplasm</location>
    </subcellularLocation>
</comment>
<comment type="similarity">
    <text evidence="4">Belongs to the snRNP Sm proteins family.</text>
</comment>
<proteinExistence type="evidence at protein level"/>
<gene>
    <name type="primary">lsm8</name>
    <name type="ORF">SPCC1840.10</name>
</gene>
<name>LSM8_SCHPO</name>
<evidence type="ECO:0000250" key="1">
    <source>
        <dbReference type="UniProtKB" id="P47093"/>
    </source>
</evidence>
<evidence type="ECO:0000255" key="2">
    <source>
        <dbReference type="PROSITE-ProRule" id="PRU01346"/>
    </source>
</evidence>
<evidence type="ECO:0000269" key="3">
    <source>
    </source>
</evidence>
<evidence type="ECO:0000305" key="4"/>
<evidence type="ECO:0007744" key="5">
    <source>
        <dbReference type="PDB" id="6PPN"/>
    </source>
</evidence>
<evidence type="ECO:0007744" key="6">
    <source>
        <dbReference type="PDB" id="6PPP"/>
    </source>
</evidence>
<evidence type="ECO:0007829" key="7">
    <source>
        <dbReference type="PDB" id="6PPN"/>
    </source>
</evidence>
<organism>
    <name type="scientific">Schizosaccharomyces pombe (strain 972 / ATCC 24843)</name>
    <name type="common">Fission yeast</name>
    <dbReference type="NCBI Taxonomy" id="284812"/>
    <lineage>
        <taxon>Eukaryota</taxon>
        <taxon>Fungi</taxon>
        <taxon>Dikarya</taxon>
        <taxon>Ascomycota</taxon>
        <taxon>Taphrinomycotina</taxon>
        <taxon>Schizosaccharomycetes</taxon>
        <taxon>Schizosaccharomycetales</taxon>
        <taxon>Schizosaccharomycetaceae</taxon>
        <taxon>Schizosaccharomyces</taxon>
    </lineage>
</organism>
<sequence length="94" mass="10563">MSLADFMEQRVQVITNDGRVVLGSLKGFDHTTNLILSDSFERIISMDQDMETIPLGVYLLRGENVAMVGLVNEELDSEIEWTKIRGEAIPDVVH</sequence>
<dbReference type="EMBL" id="CU329672">
    <property type="protein sequence ID" value="CAA20133.1"/>
    <property type="molecule type" value="Genomic_DNA"/>
</dbReference>
<dbReference type="PIR" id="T41178">
    <property type="entry name" value="T41178"/>
</dbReference>
<dbReference type="RefSeq" id="NP_588509.1">
    <property type="nucleotide sequence ID" value="NM_001023499.2"/>
</dbReference>
<dbReference type="PDB" id="6PPN">
    <property type="method" value="X-ray"/>
    <property type="resolution" value="1.91 A"/>
    <property type="chains" value="H/P=1-94"/>
</dbReference>
<dbReference type="PDB" id="6PPP">
    <property type="method" value="X-ray"/>
    <property type="resolution" value="2.33 A"/>
    <property type="chains" value="H/P=1-94"/>
</dbReference>
<dbReference type="PDBsum" id="6PPN"/>
<dbReference type="PDBsum" id="6PPP"/>
<dbReference type="SMR" id="O74483"/>
<dbReference type="BioGRID" id="275888">
    <property type="interactions" value="6"/>
</dbReference>
<dbReference type="FunCoup" id="O74483">
    <property type="interactions" value="539"/>
</dbReference>
<dbReference type="IntAct" id="O74483">
    <property type="interactions" value="1"/>
</dbReference>
<dbReference type="STRING" id="284812.O74483"/>
<dbReference type="iPTMnet" id="O74483"/>
<dbReference type="PaxDb" id="4896-SPCC1840.10.1"/>
<dbReference type="EnsemblFungi" id="SPCC1840.10.1">
    <property type="protein sequence ID" value="SPCC1840.10.1:pep"/>
    <property type="gene ID" value="SPCC1840.10"/>
</dbReference>
<dbReference type="GeneID" id="2539322"/>
<dbReference type="KEGG" id="spo:2539322"/>
<dbReference type="PomBase" id="SPCC1840.10">
    <property type="gene designation" value="lsm8"/>
</dbReference>
<dbReference type="VEuPathDB" id="FungiDB:SPCC1840.10"/>
<dbReference type="eggNOG" id="KOG1784">
    <property type="taxonomic scope" value="Eukaryota"/>
</dbReference>
<dbReference type="HOGENOM" id="CLU_076902_8_1_1"/>
<dbReference type="InParanoid" id="O74483"/>
<dbReference type="OMA" id="AACDQTT"/>
<dbReference type="PhylomeDB" id="O74483"/>
<dbReference type="PRO" id="PR:O74483"/>
<dbReference type="Proteomes" id="UP000002485">
    <property type="component" value="Chromosome III"/>
</dbReference>
<dbReference type="GO" id="GO:0120115">
    <property type="term" value="C:Lsm2-8 complex"/>
    <property type="evidence" value="ECO:0000269"/>
    <property type="project" value="PomBase"/>
</dbReference>
<dbReference type="GO" id="GO:0005634">
    <property type="term" value="C:nucleus"/>
    <property type="evidence" value="ECO:0007005"/>
    <property type="project" value="PomBase"/>
</dbReference>
<dbReference type="GO" id="GO:0071011">
    <property type="term" value="C:precatalytic spliceosome"/>
    <property type="evidence" value="ECO:0000318"/>
    <property type="project" value="GO_Central"/>
</dbReference>
<dbReference type="GO" id="GO:0005697">
    <property type="term" value="C:telomerase holoenzyme complex"/>
    <property type="evidence" value="ECO:0000269"/>
    <property type="project" value="PomBase"/>
</dbReference>
<dbReference type="GO" id="GO:0005686">
    <property type="term" value="C:U2 snRNP"/>
    <property type="evidence" value="ECO:0000269"/>
    <property type="project" value="PomBase"/>
</dbReference>
<dbReference type="GO" id="GO:0046540">
    <property type="term" value="C:U4/U6 x U5 tri-snRNP complex"/>
    <property type="evidence" value="ECO:0000318"/>
    <property type="project" value="GO_Central"/>
</dbReference>
<dbReference type="GO" id="GO:0005682">
    <property type="term" value="C:U5 snRNP"/>
    <property type="evidence" value="ECO:0000314"/>
    <property type="project" value="PomBase"/>
</dbReference>
<dbReference type="GO" id="GO:0005688">
    <property type="term" value="C:U6 snRNP"/>
    <property type="evidence" value="ECO:0000269"/>
    <property type="project" value="PomBase"/>
</dbReference>
<dbReference type="GO" id="GO:0003729">
    <property type="term" value="F:mRNA binding"/>
    <property type="evidence" value="ECO:0000318"/>
    <property type="project" value="GO_Central"/>
</dbReference>
<dbReference type="GO" id="GO:0030620">
    <property type="term" value="F:U2 snRNA binding"/>
    <property type="evidence" value="ECO:0000314"/>
    <property type="project" value="PomBase"/>
</dbReference>
<dbReference type="GO" id="GO:0000398">
    <property type="term" value="P:mRNA splicing, via spliceosome"/>
    <property type="evidence" value="ECO:0000318"/>
    <property type="project" value="GO_Central"/>
</dbReference>
<dbReference type="GO" id="GO:0034337">
    <property type="term" value="P:RNA folding"/>
    <property type="evidence" value="ECO:0007669"/>
    <property type="project" value="GOC"/>
</dbReference>
<dbReference type="GO" id="GO:1905323">
    <property type="term" value="P:telomerase holoenzyme complex assembly"/>
    <property type="evidence" value="ECO:0000304"/>
    <property type="project" value="PomBase"/>
</dbReference>
<dbReference type="CDD" id="cd01727">
    <property type="entry name" value="LSm8"/>
    <property type="match status" value="1"/>
</dbReference>
<dbReference type="FunFam" id="2.30.30.100:FF:000027">
    <property type="entry name" value="U6 snRNA-associated Sm-like protein LSm8"/>
    <property type="match status" value="1"/>
</dbReference>
<dbReference type="Gene3D" id="2.30.30.100">
    <property type="match status" value="1"/>
</dbReference>
<dbReference type="InterPro" id="IPR034103">
    <property type="entry name" value="Lsm8"/>
</dbReference>
<dbReference type="InterPro" id="IPR010920">
    <property type="entry name" value="LSM_dom_sf"/>
</dbReference>
<dbReference type="InterPro" id="IPR044642">
    <property type="entry name" value="PTHR15588"/>
</dbReference>
<dbReference type="InterPro" id="IPR047575">
    <property type="entry name" value="Sm"/>
</dbReference>
<dbReference type="InterPro" id="IPR001163">
    <property type="entry name" value="Sm_dom_euk/arc"/>
</dbReference>
<dbReference type="PANTHER" id="PTHR15588">
    <property type="entry name" value="LSM1"/>
    <property type="match status" value="1"/>
</dbReference>
<dbReference type="PANTHER" id="PTHR15588:SF9">
    <property type="entry name" value="U6 SNRNA-ASSOCIATED SM-LIKE PROTEIN LSM8"/>
    <property type="match status" value="1"/>
</dbReference>
<dbReference type="Pfam" id="PF01423">
    <property type="entry name" value="LSM"/>
    <property type="match status" value="1"/>
</dbReference>
<dbReference type="SMART" id="SM00651">
    <property type="entry name" value="Sm"/>
    <property type="match status" value="1"/>
</dbReference>
<dbReference type="SUPFAM" id="SSF50182">
    <property type="entry name" value="Sm-like ribonucleoproteins"/>
    <property type="match status" value="1"/>
</dbReference>
<dbReference type="PROSITE" id="PS52002">
    <property type="entry name" value="SM"/>
    <property type="match status" value="1"/>
</dbReference>
<reference key="1">
    <citation type="journal article" date="2002" name="Nature">
        <title>The genome sequence of Schizosaccharomyces pombe.</title>
        <authorList>
            <person name="Wood V."/>
            <person name="Gwilliam R."/>
            <person name="Rajandream M.A."/>
            <person name="Lyne M.H."/>
            <person name="Lyne R."/>
            <person name="Stewart A."/>
            <person name="Sgouros J.G."/>
            <person name="Peat N."/>
            <person name="Hayles J."/>
            <person name="Baker S.G."/>
            <person name="Basham D."/>
            <person name="Bowman S."/>
            <person name="Brooks K."/>
            <person name="Brown D."/>
            <person name="Brown S."/>
            <person name="Chillingworth T."/>
            <person name="Churcher C.M."/>
            <person name="Collins M."/>
            <person name="Connor R."/>
            <person name="Cronin A."/>
            <person name="Davis P."/>
            <person name="Feltwell T."/>
            <person name="Fraser A."/>
            <person name="Gentles S."/>
            <person name="Goble A."/>
            <person name="Hamlin N."/>
            <person name="Harris D.E."/>
            <person name="Hidalgo J."/>
            <person name="Hodgson G."/>
            <person name="Holroyd S."/>
            <person name="Hornsby T."/>
            <person name="Howarth S."/>
            <person name="Huckle E.J."/>
            <person name="Hunt S."/>
            <person name="Jagels K."/>
            <person name="James K.D."/>
            <person name="Jones L."/>
            <person name="Jones M."/>
            <person name="Leather S."/>
            <person name="McDonald S."/>
            <person name="McLean J."/>
            <person name="Mooney P."/>
            <person name="Moule S."/>
            <person name="Mungall K.L."/>
            <person name="Murphy L.D."/>
            <person name="Niblett D."/>
            <person name="Odell C."/>
            <person name="Oliver K."/>
            <person name="O'Neil S."/>
            <person name="Pearson D."/>
            <person name="Quail M.A."/>
            <person name="Rabbinowitsch E."/>
            <person name="Rutherford K.M."/>
            <person name="Rutter S."/>
            <person name="Saunders D."/>
            <person name="Seeger K."/>
            <person name="Sharp S."/>
            <person name="Skelton J."/>
            <person name="Simmonds M.N."/>
            <person name="Squares R."/>
            <person name="Squares S."/>
            <person name="Stevens K."/>
            <person name="Taylor K."/>
            <person name="Taylor R.G."/>
            <person name="Tivey A."/>
            <person name="Walsh S.V."/>
            <person name="Warren T."/>
            <person name="Whitehead S."/>
            <person name="Woodward J.R."/>
            <person name="Volckaert G."/>
            <person name="Aert R."/>
            <person name="Robben J."/>
            <person name="Grymonprez B."/>
            <person name="Weltjens I."/>
            <person name="Vanstreels E."/>
            <person name="Rieger M."/>
            <person name="Schaefer M."/>
            <person name="Mueller-Auer S."/>
            <person name="Gabel C."/>
            <person name="Fuchs M."/>
            <person name="Duesterhoeft A."/>
            <person name="Fritzc C."/>
            <person name="Holzer E."/>
            <person name="Moestl D."/>
            <person name="Hilbert H."/>
            <person name="Borzym K."/>
            <person name="Langer I."/>
            <person name="Beck A."/>
            <person name="Lehrach H."/>
            <person name="Reinhardt R."/>
            <person name="Pohl T.M."/>
            <person name="Eger P."/>
            <person name="Zimmermann W."/>
            <person name="Wedler H."/>
            <person name="Wambutt R."/>
            <person name="Purnelle B."/>
            <person name="Goffeau A."/>
            <person name="Cadieu E."/>
            <person name="Dreano S."/>
            <person name="Gloux S."/>
            <person name="Lelaure V."/>
            <person name="Mottier S."/>
            <person name="Galibert F."/>
            <person name="Aves S.J."/>
            <person name="Xiang Z."/>
            <person name="Hunt C."/>
            <person name="Moore K."/>
            <person name="Hurst S.M."/>
            <person name="Lucas M."/>
            <person name="Rochet M."/>
            <person name="Gaillardin C."/>
            <person name="Tallada V.A."/>
            <person name="Garzon A."/>
            <person name="Thode G."/>
            <person name="Daga R.R."/>
            <person name="Cruzado L."/>
            <person name="Jimenez J."/>
            <person name="Sanchez M."/>
            <person name="del Rey F."/>
            <person name="Benito J."/>
            <person name="Dominguez A."/>
            <person name="Revuelta J.L."/>
            <person name="Moreno S."/>
            <person name="Armstrong J."/>
            <person name="Forsburg S.L."/>
            <person name="Cerutti L."/>
            <person name="Lowe T."/>
            <person name="McCombie W.R."/>
            <person name="Paulsen I."/>
            <person name="Potashkin J."/>
            <person name="Shpakovski G.V."/>
            <person name="Ussery D."/>
            <person name="Barrell B.G."/>
            <person name="Nurse P."/>
        </authorList>
    </citation>
    <scope>NUCLEOTIDE SEQUENCE [LARGE SCALE GENOMIC DNA]</scope>
    <source>
        <strain>972 / ATCC 24843</strain>
    </source>
</reference>
<reference evidence="5 6" key="2">
    <citation type="journal article" date="2020" name="RNA">
        <title>Molecular basis for the distinct cellular functions of the Lsm1-7 and Lsm2-8 complexes.</title>
        <authorList>
            <person name="Montemayor E.J."/>
            <person name="Virta J.M."/>
            <person name="Hayes S.M."/>
            <person name="Nomura Y."/>
            <person name="Brow D.A."/>
            <person name="Butcher S.E."/>
        </authorList>
    </citation>
    <scope>X-RAY CRYSTALLOGRAPHY (1.91 ANGSTROMS) IN COMPLEX WITH RNA</scope>
    <scope>FUNCTION</scope>
    <scope>SUBUNIT</scope>
    <scope>IDENTIFICATION IN THE LSM2-LSM8 COMPLEX</scope>
</reference>